<accession>Q32AF8</accession>
<gene>
    <name evidence="2" type="primary">rplL</name>
    <name type="ordered locus">SDY_3742</name>
</gene>
<reference key="1">
    <citation type="journal article" date="2005" name="Nucleic Acids Res.">
        <title>Genome dynamics and diversity of Shigella species, the etiologic agents of bacillary dysentery.</title>
        <authorList>
            <person name="Yang F."/>
            <person name="Yang J."/>
            <person name="Zhang X."/>
            <person name="Chen L."/>
            <person name="Jiang Y."/>
            <person name="Yan Y."/>
            <person name="Tang X."/>
            <person name="Wang J."/>
            <person name="Xiong Z."/>
            <person name="Dong J."/>
            <person name="Xue Y."/>
            <person name="Zhu Y."/>
            <person name="Xu X."/>
            <person name="Sun L."/>
            <person name="Chen S."/>
            <person name="Nie H."/>
            <person name="Peng J."/>
            <person name="Xu J."/>
            <person name="Wang Y."/>
            <person name="Yuan Z."/>
            <person name="Wen Y."/>
            <person name="Yao Z."/>
            <person name="Shen Y."/>
            <person name="Qiang B."/>
            <person name="Hou Y."/>
            <person name="Yu J."/>
            <person name="Jin Q."/>
        </authorList>
    </citation>
    <scope>NUCLEOTIDE SEQUENCE [LARGE SCALE GENOMIC DNA]</scope>
    <source>
        <strain>Sd197</strain>
    </source>
</reference>
<feature type="initiator methionine" description="Removed" evidence="1">
    <location>
        <position position="1"/>
    </location>
</feature>
<feature type="chain" id="PRO_0000243494" description="Large ribosomal subunit protein bL12">
    <location>
        <begin position="2"/>
        <end position="121"/>
    </location>
</feature>
<keyword id="KW-1185">Reference proteome</keyword>
<keyword id="KW-0687">Ribonucleoprotein</keyword>
<keyword id="KW-0689">Ribosomal protein</keyword>
<protein>
    <recommendedName>
        <fullName evidence="2">Large ribosomal subunit protein bL12</fullName>
    </recommendedName>
    <alternativeName>
        <fullName evidence="3">50S ribosomal protein L7/L12</fullName>
    </alternativeName>
</protein>
<dbReference type="EMBL" id="CP000034">
    <property type="protein sequence ID" value="ABB63697.1"/>
    <property type="molecule type" value="Genomic_DNA"/>
</dbReference>
<dbReference type="RefSeq" id="WP_000028878.1">
    <property type="nucleotide sequence ID" value="NC_007606.1"/>
</dbReference>
<dbReference type="RefSeq" id="YP_405188.1">
    <property type="nucleotide sequence ID" value="NC_007606.1"/>
</dbReference>
<dbReference type="SMR" id="Q32AF8"/>
<dbReference type="STRING" id="300267.SDY_3742"/>
<dbReference type="EnsemblBacteria" id="ABB63697">
    <property type="protein sequence ID" value="ABB63697"/>
    <property type="gene ID" value="SDY_3742"/>
</dbReference>
<dbReference type="GeneID" id="86944525"/>
<dbReference type="KEGG" id="sdy:SDY_3742"/>
<dbReference type="PATRIC" id="fig|300267.13.peg.4437"/>
<dbReference type="HOGENOM" id="CLU_086499_3_2_6"/>
<dbReference type="Proteomes" id="UP000002716">
    <property type="component" value="Chromosome"/>
</dbReference>
<dbReference type="GO" id="GO:0022625">
    <property type="term" value="C:cytosolic large ribosomal subunit"/>
    <property type="evidence" value="ECO:0007669"/>
    <property type="project" value="TreeGrafter"/>
</dbReference>
<dbReference type="GO" id="GO:0003729">
    <property type="term" value="F:mRNA binding"/>
    <property type="evidence" value="ECO:0007669"/>
    <property type="project" value="TreeGrafter"/>
</dbReference>
<dbReference type="GO" id="GO:0003735">
    <property type="term" value="F:structural constituent of ribosome"/>
    <property type="evidence" value="ECO:0007669"/>
    <property type="project" value="InterPro"/>
</dbReference>
<dbReference type="GO" id="GO:0006412">
    <property type="term" value="P:translation"/>
    <property type="evidence" value="ECO:0007669"/>
    <property type="project" value="UniProtKB-UniRule"/>
</dbReference>
<dbReference type="CDD" id="cd00387">
    <property type="entry name" value="Ribosomal_L7_L12"/>
    <property type="match status" value="1"/>
</dbReference>
<dbReference type="FunFam" id="1.20.5.710:FF:000001">
    <property type="entry name" value="50S ribosomal protein L7/L12"/>
    <property type="match status" value="1"/>
</dbReference>
<dbReference type="FunFam" id="3.30.1390.10:FF:000001">
    <property type="entry name" value="50S ribosomal protein L7/L12"/>
    <property type="match status" value="1"/>
</dbReference>
<dbReference type="Gene3D" id="3.30.1390.10">
    <property type="match status" value="1"/>
</dbReference>
<dbReference type="Gene3D" id="1.20.5.710">
    <property type="entry name" value="Single helix bin"/>
    <property type="match status" value="1"/>
</dbReference>
<dbReference type="HAMAP" id="MF_00368">
    <property type="entry name" value="Ribosomal_bL12"/>
    <property type="match status" value="1"/>
</dbReference>
<dbReference type="InterPro" id="IPR000206">
    <property type="entry name" value="Ribosomal_bL12"/>
</dbReference>
<dbReference type="InterPro" id="IPR013823">
    <property type="entry name" value="Ribosomal_bL12_C"/>
</dbReference>
<dbReference type="InterPro" id="IPR014719">
    <property type="entry name" value="Ribosomal_bL12_C/ClpS-like"/>
</dbReference>
<dbReference type="InterPro" id="IPR008932">
    <property type="entry name" value="Ribosomal_bL12_oligo"/>
</dbReference>
<dbReference type="InterPro" id="IPR036235">
    <property type="entry name" value="Ribosomal_bL12_oligo_N_sf"/>
</dbReference>
<dbReference type="NCBIfam" id="TIGR00855">
    <property type="entry name" value="L12"/>
    <property type="match status" value="1"/>
</dbReference>
<dbReference type="PANTHER" id="PTHR45987">
    <property type="entry name" value="39S RIBOSOMAL PROTEIN L12"/>
    <property type="match status" value="1"/>
</dbReference>
<dbReference type="PANTHER" id="PTHR45987:SF4">
    <property type="entry name" value="LARGE RIBOSOMAL SUBUNIT PROTEIN BL12M"/>
    <property type="match status" value="1"/>
</dbReference>
<dbReference type="Pfam" id="PF00542">
    <property type="entry name" value="Ribosomal_L12"/>
    <property type="match status" value="1"/>
</dbReference>
<dbReference type="Pfam" id="PF16320">
    <property type="entry name" value="Ribosomal_L12_N"/>
    <property type="match status" value="1"/>
</dbReference>
<dbReference type="SUPFAM" id="SSF54736">
    <property type="entry name" value="ClpS-like"/>
    <property type="match status" value="1"/>
</dbReference>
<dbReference type="SUPFAM" id="SSF48300">
    <property type="entry name" value="Ribosomal protein L7/12, oligomerisation (N-terminal) domain"/>
    <property type="match status" value="1"/>
</dbReference>
<comment type="function">
    <text evidence="2">Forms part of the ribosomal stalk which helps the ribosome interact with GTP-bound translation factors. Is thus essential for accurate translation.</text>
</comment>
<comment type="subunit">
    <text evidence="2">Homodimer. Part of the ribosomal stalk of the 50S ribosomal subunit. Forms a multimeric L10(L12)X complex, where L10 forms an elongated spine to which 2 to 4 L12 dimers bind in a sequential fashion. Binds GTP-bound translation factors.</text>
</comment>
<comment type="similarity">
    <text evidence="2">Belongs to the bacterial ribosomal protein bL12 family.</text>
</comment>
<proteinExistence type="inferred from homology"/>
<sequence length="121" mass="12295">MSITKDQIIEAVAAMSVMDVVELISAMEEKFGVSAAAAVAVAAGPVEAAEEKTEFDVILKAAGANKVAVIKAVRGATGLGLKEAKDLVESAPAALKEGVSKDDAEALKKALEEAGAEVEVK</sequence>
<evidence type="ECO:0000250" key="1"/>
<evidence type="ECO:0000255" key="2">
    <source>
        <dbReference type="HAMAP-Rule" id="MF_00368"/>
    </source>
</evidence>
<evidence type="ECO:0000305" key="3"/>
<name>RL7_SHIDS</name>
<organism>
    <name type="scientific">Shigella dysenteriae serotype 1 (strain Sd197)</name>
    <dbReference type="NCBI Taxonomy" id="300267"/>
    <lineage>
        <taxon>Bacteria</taxon>
        <taxon>Pseudomonadati</taxon>
        <taxon>Pseudomonadota</taxon>
        <taxon>Gammaproteobacteria</taxon>
        <taxon>Enterobacterales</taxon>
        <taxon>Enterobacteriaceae</taxon>
        <taxon>Shigella</taxon>
    </lineage>
</organism>